<proteinExistence type="inferred from homology"/>
<gene>
    <name evidence="1" type="primary">tmk</name>
    <name type="ordered locus">Cmaq_0300</name>
</gene>
<comment type="catalytic activity">
    <reaction evidence="1">
        <text>dTMP + ATP = dTDP + ADP</text>
        <dbReference type="Rhea" id="RHEA:13517"/>
        <dbReference type="ChEBI" id="CHEBI:30616"/>
        <dbReference type="ChEBI" id="CHEBI:58369"/>
        <dbReference type="ChEBI" id="CHEBI:63528"/>
        <dbReference type="ChEBI" id="CHEBI:456216"/>
        <dbReference type="EC" id="2.7.4.9"/>
    </reaction>
</comment>
<comment type="similarity">
    <text evidence="1">Belongs to the thymidylate kinase family.</text>
</comment>
<dbReference type="EC" id="2.7.4.9" evidence="1"/>
<dbReference type="EMBL" id="CP000852">
    <property type="protein sequence ID" value="ABW01148.1"/>
    <property type="molecule type" value="Genomic_DNA"/>
</dbReference>
<dbReference type="RefSeq" id="WP_012185368.1">
    <property type="nucleotide sequence ID" value="NC_009954.1"/>
</dbReference>
<dbReference type="SMR" id="A8MB58"/>
<dbReference type="STRING" id="397948.Cmaq_0300"/>
<dbReference type="GeneID" id="32154301"/>
<dbReference type="KEGG" id="cma:Cmaq_0300"/>
<dbReference type="eggNOG" id="arCOG01891">
    <property type="taxonomic scope" value="Archaea"/>
</dbReference>
<dbReference type="HOGENOM" id="CLU_049131_1_3_2"/>
<dbReference type="OrthoDB" id="43083at2157"/>
<dbReference type="Proteomes" id="UP000001137">
    <property type="component" value="Chromosome"/>
</dbReference>
<dbReference type="GO" id="GO:0005737">
    <property type="term" value="C:cytoplasm"/>
    <property type="evidence" value="ECO:0007669"/>
    <property type="project" value="TreeGrafter"/>
</dbReference>
<dbReference type="GO" id="GO:0005524">
    <property type="term" value="F:ATP binding"/>
    <property type="evidence" value="ECO:0007669"/>
    <property type="project" value="UniProtKB-UniRule"/>
</dbReference>
<dbReference type="GO" id="GO:0004798">
    <property type="term" value="F:dTMP kinase activity"/>
    <property type="evidence" value="ECO:0007669"/>
    <property type="project" value="UniProtKB-UniRule"/>
</dbReference>
<dbReference type="GO" id="GO:0006233">
    <property type="term" value="P:dTDP biosynthetic process"/>
    <property type="evidence" value="ECO:0007669"/>
    <property type="project" value="InterPro"/>
</dbReference>
<dbReference type="GO" id="GO:0006235">
    <property type="term" value="P:dTTP biosynthetic process"/>
    <property type="evidence" value="ECO:0007669"/>
    <property type="project" value="UniProtKB-UniRule"/>
</dbReference>
<dbReference type="GO" id="GO:0006227">
    <property type="term" value="P:dUDP biosynthetic process"/>
    <property type="evidence" value="ECO:0007669"/>
    <property type="project" value="TreeGrafter"/>
</dbReference>
<dbReference type="CDD" id="cd01672">
    <property type="entry name" value="TMPK"/>
    <property type="match status" value="1"/>
</dbReference>
<dbReference type="Gene3D" id="3.40.50.300">
    <property type="entry name" value="P-loop containing nucleotide triphosphate hydrolases"/>
    <property type="match status" value="1"/>
</dbReference>
<dbReference type="HAMAP" id="MF_00165">
    <property type="entry name" value="Thymidylate_kinase"/>
    <property type="match status" value="1"/>
</dbReference>
<dbReference type="InterPro" id="IPR027417">
    <property type="entry name" value="P-loop_NTPase"/>
</dbReference>
<dbReference type="InterPro" id="IPR039430">
    <property type="entry name" value="Thymidylate_kin-like_dom"/>
</dbReference>
<dbReference type="InterPro" id="IPR018095">
    <property type="entry name" value="Thymidylate_kin_CS"/>
</dbReference>
<dbReference type="InterPro" id="IPR018094">
    <property type="entry name" value="Thymidylate_kinase"/>
</dbReference>
<dbReference type="NCBIfam" id="TIGR00041">
    <property type="entry name" value="DTMP_kinase"/>
    <property type="match status" value="1"/>
</dbReference>
<dbReference type="PANTHER" id="PTHR10344">
    <property type="entry name" value="THYMIDYLATE KINASE"/>
    <property type="match status" value="1"/>
</dbReference>
<dbReference type="PANTHER" id="PTHR10344:SF4">
    <property type="entry name" value="UMP-CMP KINASE 2, MITOCHONDRIAL"/>
    <property type="match status" value="1"/>
</dbReference>
<dbReference type="Pfam" id="PF02223">
    <property type="entry name" value="Thymidylate_kin"/>
    <property type="match status" value="1"/>
</dbReference>
<dbReference type="SUPFAM" id="SSF52540">
    <property type="entry name" value="P-loop containing nucleoside triphosphate hydrolases"/>
    <property type="match status" value="1"/>
</dbReference>
<dbReference type="PROSITE" id="PS01331">
    <property type="entry name" value="THYMIDYLATE_KINASE"/>
    <property type="match status" value="1"/>
</dbReference>
<name>KTHY_CALMQ</name>
<reference key="1">
    <citation type="submission" date="2007-10" db="EMBL/GenBank/DDBJ databases">
        <title>Complete sequence of Caldivirga maquilingensis IC-167.</title>
        <authorList>
            <consortium name="US DOE Joint Genome Institute"/>
            <person name="Copeland A."/>
            <person name="Lucas S."/>
            <person name="Lapidus A."/>
            <person name="Barry K."/>
            <person name="Glavina del Rio T."/>
            <person name="Dalin E."/>
            <person name="Tice H."/>
            <person name="Pitluck S."/>
            <person name="Saunders E."/>
            <person name="Brettin T."/>
            <person name="Bruce D."/>
            <person name="Detter J.C."/>
            <person name="Han C."/>
            <person name="Schmutz J."/>
            <person name="Larimer F."/>
            <person name="Land M."/>
            <person name="Hauser L."/>
            <person name="Kyrpides N."/>
            <person name="Ivanova N."/>
            <person name="Biddle J.F."/>
            <person name="Zhang Z."/>
            <person name="Fitz-Gibbon S.T."/>
            <person name="Lowe T.M."/>
            <person name="Saltikov C."/>
            <person name="House C.H."/>
            <person name="Richardson P."/>
        </authorList>
    </citation>
    <scope>NUCLEOTIDE SEQUENCE [LARGE SCALE GENOMIC DNA]</scope>
    <source>
        <strain>ATCC 700844 / DSM 13496 / JCM 10307 / IC-167</strain>
    </source>
</reference>
<evidence type="ECO:0000255" key="1">
    <source>
        <dbReference type="HAMAP-Rule" id="MF_00165"/>
    </source>
</evidence>
<sequence>MCIFVDVEGIDGVGKSTVIRLTADELRRRGYLVYTTSEPSDSPIGLFIRRSILESNLEVEPMALALLFAADRVIHYNRVIKPKVKEGYIVITERYIESSVAYQGSQGVPVEWIIEVNSMVAEPDLVIVLNAPLNTVASRLSNRGMLEYFERNTDFLRSVQEVYLRRARERNYPVIDASRVINNVVNDVLTLIEDKAKGKCKNYNQ</sequence>
<feature type="chain" id="PRO_1000123562" description="Probable thymidylate kinase">
    <location>
        <begin position="1"/>
        <end position="205"/>
    </location>
</feature>
<feature type="binding site" evidence="1">
    <location>
        <begin position="9"/>
        <end position="16"/>
    </location>
    <ligand>
        <name>ATP</name>
        <dbReference type="ChEBI" id="CHEBI:30616"/>
    </ligand>
</feature>
<protein>
    <recommendedName>
        <fullName evidence="1">Probable thymidylate kinase</fullName>
        <ecNumber evidence="1">2.7.4.9</ecNumber>
    </recommendedName>
    <alternativeName>
        <fullName evidence="1">dTMP kinase</fullName>
    </alternativeName>
</protein>
<organism>
    <name type="scientific">Caldivirga maquilingensis (strain ATCC 700844 / DSM 13496 / JCM 10307 / IC-167)</name>
    <dbReference type="NCBI Taxonomy" id="397948"/>
    <lineage>
        <taxon>Archaea</taxon>
        <taxon>Thermoproteota</taxon>
        <taxon>Thermoprotei</taxon>
        <taxon>Thermoproteales</taxon>
        <taxon>Thermoproteaceae</taxon>
        <taxon>Caldivirga</taxon>
    </lineage>
</organism>
<keyword id="KW-0067">ATP-binding</keyword>
<keyword id="KW-0418">Kinase</keyword>
<keyword id="KW-0545">Nucleotide biosynthesis</keyword>
<keyword id="KW-0547">Nucleotide-binding</keyword>
<keyword id="KW-1185">Reference proteome</keyword>
<keyword id="KW-0808">Transferase</keyword>
<accession>A8MB58</accession>